<dbReference type="EMBL" id="AB066291">
    <property type="protein sequence ID" value="BAC07550.1"/>
    <property type="molecule type" value="mRNA"/>
</dbReference>
<dbReference type="EMBL" id="BC093855">
    <property type="protein sequence ID" value="AAH93855.1"/>
    <property type="molecule type" value="mRNA"/>
</dbReference>
<dbReference type="BioMuta" id="HGNC:16302"/>
<dbReference type="TopDownProteomics" id="P59022"/>
<dbReference type="AGR" id="HGNC:16302"/>
<dbReference type="GeneCards" id="DSCR10"/>
<dbReference type="HGNC" id="HGNC:16302">
    <property type="gene designation" value="DSCR10"/>
</dbReference>
<dbReference type="neXtProt" id="NX_P59022"/>
<dbReference type="InParanoid" id="P59022"/>
<dbReference type="PAN-GO" id="P59022">
    <property type="GO annotations" value="0 GO annotations based on evolutionary models"/>
</dbReference>
<dbReference type="PhylomeDB" id="P59022"/>
<dbReference type="PathwayCommons" id="P59022"/>
<dbReference type="Pharos" id="P59022">
    <property type="development level" value="Tdark"/>
</dbReference>
<dbReference type="PRO" id="PR:P59022"/>
<dbReference type="Proteomes" id="UP000005640">
    <property type="component" value="Unplaced"/>
</dbReference>
<dbReference type="RNAct" id="P59022">
    <property type="molecule type" value="protein"/>
</dbReference>
<evidence type="ECO:0000269" key="1">
    <source>
    </source>
</evidence>
<evidence type="ECO:0000305" key="2"/>
<keyword id="KW-1185">Reference proteome</keyword>
<protein>
    <recommendedName>
        <fullName>Down syndrome critical region protein 10</fullName>
    </recommendedName>
</protein>
<comment type="tissue specificity">
    <text evidence="1">Expressed in placenta and testis.</text>
</comment>
<comment type="caution">
    <text evidence="2">Product of a dubious CDS prediction. May be a non-coding RNA. No experimental confirmation available.</text>
</comment>
<organism>
    <name type="scientific">Homo sapiens</name>
    <name type="common">Human</name>
    <dbReference type="NCBI Taxonomy" id="9606"/>
    <lineage>
        <taxon>Eukaryota</taxon>
        <taxon>Metazoa</taxon>
        <taxon>Chordata</taxon>
        <taxon>Craniata</taxon>
        <taxon>Vertebrata</taxon>
        <taxon>Euteleostomi</taxon>
        <taxon>Mammalia</taxon>
        <taxon>Eutheria</taxon>
        <taxon>Euarchontoglires</taxon>
        <taxon>Primates</taxon>
        <taxon>Haplorrhini</taxon>
        <taxon>Catarrhini</taxon>
        <taxon>Hominidae</taxon>
        <taxon>Homo</taxon>
    </lineage>
</organism>
<gene>
    <name type="primary">DSCR10</name>
</gene>
<proteinExistence type="uncertain"/>
<reference key="1">
    <citation type="journal article" date="2002" name="DNA Res.">
        <title>Identification of two novel primate-specific genes in DSCR.</title>
        <authorList>
            <person name="Takamatsu K."/>
            <person name="Maekawa K."/>
            <person name="Togashi T."/>
            <person name="Choi D.K."/>
            <person name="Suzuki Y."/>
            <person name="Taylor T.D."/>
            <person name="Toyoda A."/>
            <person name="Sugano S."/>
            <person name="Fujiyama A."/>
            <person name="Hattori M."/>
            <person name="Sakaki Y."/>
            <person name="Takeda T."/>
        </authorList>
    </citation>
    <scope>NUCLEOTIDE SEQUENCE [MRNA]</scope>
    <scope>TISSUE SPECIFICITY</scope>
</reference>
<reference key="2">
    <citation type="journal article" date="2004" name="Genome Res.">
        <title>The status, quality, and expansion of the NIH full-length cDNA project: the Mammalian Gene Collection (MGC).</title>
        <authorList>
            <consortium name="The MGC Project Team"/>
        </authorList>
    </citation>
    <scope>NUCLEOTIDE SEQUENCE [LARGE SCALE MRNA]</scope>
    <source>
        <tissue>Placenta</tissue>
    </source>
</reference>
<accession>P59022</accession>
<accession>Q52LN2</accession>
<feature type="chain" id="PRO_0000080016" description="Down syndrome critical region protein 10">
    <location>
        <begin position="1"/>
        <end position="87"/>
    </location>
</feature>
<sequence length="87" mass="9286">MQIVQGFPADAPLCALMWTCSFLLPGLQTETPYPCTSLCLSSSQSAHPPLPVRVFSAESGYGIPFCAEPCSRVTVCHLQAVPVCMPV</sequence>
<name>DSC10_HUMAN</name>